<accession>Q63YJ0</accession>
<evidence type="ECO:0000255" key="1">
    <source>
        <dbReference type="HAMAP-Rule" id="MF_00296"/>
    </source>
</evidence>
<proteinExistence type="inferred from homology"/>
<keyword id="KW-0012">Acyltransferase</keyword>
<keyword id="KW-0028">Amino-acid biosynthesis</keyword>
<keyword id="KW-0963">Cytoplasm</keyword>
<keyword id="KW-0486">Methionine biosynthesis</keyword>
<keyword id="KW-1185">Reference proteome</keyword>
<keyword id="KW-0808">Transferase</keyword>
<reference key="1">
    <citation type="journal article" date="2004" name="Proc. Natl. Acad. Sci. U.S.A.">
        <title>Genomic plasticity of the causative agent of melioidosis, Burkholderia pseudomallei.</title>
        <authorList>
            <person name="Holden M.T.G."/>
            <person name="Titball R.W."/>
            <person name="Peacock S.J."/>
            <person name="Cerdeno-Tarraga A.-M."/>
            <person name="Atkins T."/>
            <person name="Crossman L.C."/>
            <person name="Pitt T."/>
            <person name="Churcher C."/>
            <person name="Mungall K.L."/>
            <person name="Bentley S.D."/>
            <person name="Sebaihia M."/>
            <person name="Thomson N.R."/>
            <person name="Bason N."/>
            <person name="Beacham I.R."/>
            <person name="Brooks K."/>
            <person name="Brown K.A."/>
            <person name="Brown N.F."/>
            <person name="Challis G.L."/>
            <person name="Cherevach I."/>
            <person name="Chillingworth T."/>
            <person name="Cronin A."/>
            <person name="Crossett B."/>
            <person name="Davis P."/>
            <person name="DeShazer D."/>
            <person name="Feltwell T."/>
            <person name="Fraser A."/>
            <person name="Hance Z."/>
            <person name="Hauser H."/>
            <person name="Holroyd S."/>
            <person name="Jagels K."/>
            <person name="Keith K.E."/>
            <person name="Maddison M."/>
            <person name="Moule S."/>
            <person name="Price C."/>
            <person name="Quail M.A."/>
            <person name="Rabbinowitsch E."/>
            <person name="Rutherford K."/>
            <person name="Sanders M."/>
            <person name="Simmonds M."/>
            <person name="Songsivilai S."/>
            <person name="Stevens K."/>
            <person name="Tumapa S."/>
            <person name="Vesaratchavest M."/>
            <person name="Whitehead S."/>
            <person name="Yeats C."/>
            <person name="Barrell B.G."/>
            <person name="Oyston P.C.F."/>
            <person name="Parkhill J."/>
        </authorList>
    </citation>
    <scope>NUCLEOTIDE SEQUENCE [LARGE SCALE GENOMIC DNA]</scope>
    <source>
        <strain>K96243</strain>
    </source>
</reference>
<protein>
    <recommendedName>
        <fullName evidence="1">Homoserine O-succinyltransferase</fullName>
        <shortName evidence="1">HST</shortName>
        <ecNumber evidence="1">2.3.1.46</ecNumber>
    </recommendedName>
    <alternativeName>
        <fullName evidence="1">Homoserine transsuccinylase</fullName>
        <shortName evidence="1">HTS</shortName>
    </alternativeName>
</protein>
<dbReference type="EC" id="2.3.1.46" evidence="1"/>
<dbReference type="EMBL" id="BX571965">
    <property type="protein sequence ID" value="CAH34184.1"/>
    <property type="molecule type" value="Genomic_DNA"/>
</dbReference>
<dbReference type="RefSeq" id="YP_106825.1">
    <property type="nucleotide sequence ID" value="NC_006350.1"/>
</dbReference>
<dbReference type="SMR" id="Q63YJ0"/>
<dbReference type="STRING" id="272560.BPSL0197"/>
<dbReference type="ESTHER" id="burma-metx">
    <property type="family name" value="Homoserine_transacetylase"/>
</dbReference>
<dbReference type="KEGG" id="bps:BPSL0197"/>
<dbReference type="PATRIC" id="fig|272560.51.peg.1522"/>
<dbReference type="eggNOG" id="COG2021">
    <property type="taxonomic scope" value="Bacteria"/>
</dbReference>
<dbReference type="UniPathway" id="UPA00051">
    <property type="reaction ID" value="UER00075"/>
</dbReference>
<dbReference type="Proteomes" id="UP000000605">
    <property type="component" value="Chromosome 1"/>
</dbReference>
<dbReference type="GO" id="GO:0005737">
    <property type="term" value="C:cytoplasm"/>
    <property type="evidence" value="ECO:0007669"/>
    <property type="project" value="UniProtKB-SubCell"/>
</dbReference>
<dbReference type="GO" id="GO:0004414">
    <property type="term" value="F:homoserine O-acetyltransferase activity"/>
    <property type="evidence" value="ECO:0007669"/>
    <property type="project" value="TreeGrafter"/>
</dbReference>
<dbReference type="GO" id="GO:0008899">
    <property type="term" value="F:homoserine O-succinyltransferase activity"/>
    <property type="evidence" value="ECO:0007669"/>
    <property type="project" value="UniProtKB-UniRule"/>
</dbReference>
<dbReference type="GO" id="GO:0009092">
    <property type="term" value="P:homoserine metabolic process"/>
    <property type="evidence" value="ECO:0007669"/>
    <property type="project" value="TreeGrafter"/>
</dbReference>
<dbReference type="GO" id="GO:0009086">
    <property type="term" value="P:methionine biosynthetic process"/>
    <property type="evidence" value="ECO:0007669"/>
    <property type="project" value="UniProtKB-UniRule"/>
</dbReference>
<dbReference type="FunFam" id="1.10.1740.110:FF:000001">
    <property type="entry name" value="Homoserine O-acetyltransferase"/>
    <property type="match status" value="1"/>
</dbReference>
<dbReference type="Gene3D" id="1.10.1740.110">
    <property type="match status" value="1"/>
</dbReference>
<dbReference type="Gene3D" id="3.40.50.1820">
    <property type="entry name" value="alpha/beta hydrolase"/>
    <property type="match status" value="1"/>
</dbReference>
<dbReference type="HAMAP" id="MF_00296">
    <property type="entry name" value="MetX_acyltransf"/>
    <property type="match status" value="1"/>
</dbReference>
<dbReference type="InterPro" id="IPR000073">
    <property type="entry name" value="AB_hydrolase_1"/>
</dbReference>
<dbReference type="InterPro" id="IPR029058">
    <property type="entry name" value="AB_hydrolase_fold"/>
</dbReference>
<dbReference type="InterPro" id="IPR008220">
    <property type="entry name" value="HAT_MetX-like"/>
</dbReference>
<dbReference type="NCBIfam" id="TIGR01392">
    <property type="entry name" value="homoserO_Ac_trn"/>
    <property type="match status" value="1"/>
</dbReference>
<dbReference type="NCBIfam" id="NF001209">
    <property type="entry name" value="PRK00175.1"/>
    <property type="match status" value="1"/>
</dbReference>
<dbReference type="PANTHER" id="PTHR32268">
    <property type="entry name" value="HOMOSERINE O-ACETYLTRANSFERASE"/>
    <property type="match status" value="1"/>
</dbReference>
<dbReference type="PANTHER" id="PTHR32268:SF11">
    <property type="entry name" value="HOMOSERINE O-ACETYLTRANSFERASE"/>
    <property type="match status" value="1"/>
</dbReference>
<dbReference type="Pfam" id="PF00561">
    <property type="entry name" value="Abhydrolase_1"/>
    <property type="match status" value="1"/>
</dbReference>
<dbReference type="PIRSF" id="PIRSF000443">
    <property type="entry name" value="Homoser_Ac_trans"/>
    <property type="match status" value="1"/>
</dbReference>
<dbReference type="SUPFAM" id="SSF53474">
    <property type="entry name" value="alpha/beta-Hydrolases"/>
    <property type="match status" value="1"/>
</dbReference>
<sequence>MESIGVVAPHTMHFAEPLRLQSGSVLGNYQLVVETYGELNAARSNAVLVCHALNASHHVAGVYADDPRSTGWWDNMVGPGKPLDTNRFFVIGVNNLGSCFGSTGPMSIDPATGTPYGARFPVVTVEDWVHAQARVADAFGIERFAAVMGGSLGGMQALAWSLLYPERVAHCIDIASTPKLSAQNIAFNEVARSAILSDPDFHGGDYYAHGVKPRRGLRVARMIGHITYLSDDDMAEKFGRALRRADGALDAYNFNFDVEFEVESYLRYQGDKFADYFDANTYLLITRALDYFDPAKAFNGDLSAALAHTKAKYLIASFMTDWRFAPARSREIVKALLDNRRSVSYAEIDAPHGHDAFLLDDARYHNLVRAYYERIAEEVGA</sequence>
<comment type="function">
    <text evidence="1">Transfers a succinyl group from succinyl-CoA to L-homoserine, forming succinyl-L-homoserine.</text>
</comment>
<comment type="catalytic activity">
    <reaction evidence="1">
        <text>L-homoserine + succinyl-CoA = O-succinyl-L-homoserine + CoA</text>
        <dbReference type="Rhea" id="RHEA:22008"/>
        <dbReference type="ChEBI" id="CHEBI:57287"/>
        <dbReference type="ChEBI" id="CHEBI:57292"/>
        <dbReference type="ChEBI" id="CHEBI:57476"/>
        <dbReference type="ChEBI" id="CHEBI:57661"/>
        <dbReference type="EC" id="2.3.1.46"/>
    </reaction>
</comment>
<comment type="pathway">
    <text evidence="1">Amino-acid biosynthesis; L-methionine biosynthesis via de novo pathway; O-succinyl-L-homoserine from L-homoserine: step 1/1.</text>
</comment>
<comment type="subunit">
    <text evidence="1">Homodimer.</text>
</comment>
<comment type="subcellular location">
    <subcellularLocation>
        <location evidence="1">Cytoplasm</location>
    </subcellularLocation>
</comment>
<comment type="similarity">
    <text evidence="1">Belongs to the AB hydrolase superfamily. MetX family.</text>
</comment>
<name>METXS_BURPS</name>
<organism>
    <name type="scientific">Burkholderia pseudomallei (strain K96243)</name>
    <dbReference type="NCBI Taxonomy" id="272560"/>
    <lineage>
        <taxon>Bacteria</taxon>
        <taxon>Pseudomonadati</taxon>
        <taxon>Pseudomonadota</taxon>
        <taxon>Betaproteobacteria</taxon>
        <taxon>Burkholderiales</taxon>
        <taxon>Burkholderiaceae</taxon>
        <taxon>Burkholderia</taxon>
        <taxon>pseudomallei group</taxon>
    </lineage>
</organism>
<feature type="chain" id="PRO_0000155709" description="Homoserine O-succinyltransferase">
    <location>
        <begin position="1"/>
        <end position="381"/>
    </location>
</feature>
<feature type="domain" description="AB hydrolase-1" evidence="1">
    <location>
        <begin position="45"/>
        <end position="360"/>
    </location>
</feature>
<feature type="active site" description="Nucleophile" evidence="1">
    <location>
        <position position="151"/>
    </location>
</feature>
<feature type="active site" evidence="1">
    <location>
        <position position="321"/>
    </location>
</feature>
<feature type="active site" evidence="1">
    <location>
        <position position="354"/>
    </location>
</feature>
<feature type="binding site" evidence="1">
    <location>
        <position position="221"/>
    </location>
    <ligand>
        <name>substrate</name>
    </ligand>
</feature>
<feature type="binding site" evidence="1">
    <location>
        <position position="355"/>
    </location>
    <ligand>
        <name>substrate</name>
    </ligand>
</feature>
<feature type="site" description="Important for acyl-CoA specificity" evidence="1">
    <location>
        <position position="323"/>
    </location>
</feature>
<gene>
    <name evidence="1" type="primary">metXS</name>
    <name type="ordered locus">BPSL0197</name>
</gene>